<gene>
    <name evidence="1" type="primary">fusA</name>
    <name type="ordered locus">CbuG_1770</name>
</gene>
<name>EFG_COXB2</name>
<reference key="1">
    <citation type="journal article" date="2009" name="Infect. Immun.">
        <title>Comparative genomics reveal extensive transposon-mediated genomic plasticity and diversity among potential effector proteins within the genus Coxiella.</title>
        <authorList>
            <person name="Beare P.A."/>
            <person name="Unsworth N."/>
            <person name="Andoh M."/>
            <person name="Voth D.E."/>
            <person name="Omsland A."/>
            <person name="Gilk S.D."/>
            <person name="Williams K.P."/>
            <person name="Sobral B.W."/>
            <person name="Kupko J.J. III"/>
            <person name="Porcella S.F."/>
            <person name="Samuel J.E."/>
            <person name="Heinzen R.A."/>
        </authorList>
    </citation>
    <scope>NUCLEOTIDE SEQUENCE [LARGE SCALE GENOMIC DNA]</scope>
    <source>
        <strain>CbuG_Q212</strain>
    </source>
</reference>
<dbReference type="EMBL" id="CP001019">
    <property type="protein sequence ID" value="ACJ19044.1"/>
    <property type="molecule type" value="Genomic_DNA"/>
</dbReference>
<dbReference type="RefSeq" id="WP_012570413.1">
    <property type="nucleotide sequence ID" value="NC_011527.1"/>
</dbReference>
<dbReference type="SMR" id="B6J266"/>
<dbReference type="KEGG" id="cbg:CbuG_1770"/>
<dbReference type="HOGENOM" id="CLU_002794_4_1_6"/>
<dbReference type="GO" id="GO:0005737">
    <property type="term" value="C:cytoplasm"/>
    <property type="evidence" value="ECO:0007669"/>
    <property type="project" value="UniProtKB-SubCell"/>
</dbReference>
<dbReference type="GO" id="GO:0005525">
    <property type="term" value="F:GTP binding"/>
    <property type="evidence" value="ECO:0007669"/>
    <property type="project" value="UniProtKB-UniRule"/>
</dbReference>
<dbReference type="GO" id="GO:0003924">
    <property type="term" value="F:GTPase activity"/>
    <property type="evidence" value="ECO:0007669"/>
    <property type="project" value="InterPro"/>
</dbReference>
<dbReference type="GO" id="GO:0097216">
    <property type="term" value="F:guanosine tetraphosphate binding"/>
    <property type="evidence" value="ECO:0007669"/>
    <property type="project" value="UniProtKB-ARBA"/>
</dbReference>
<dbReference type="GO" id="GO:0003746">
    <property type="term" value="F:translation elongation factor activity"/>
    <property type="evidence" value="ECO:0007669"/>
    <property type="project" value="UniProtKB-UniRule"/>
</dbReference>
<dbReference type="GO" id="GO:0032790">
    <property type="term" value="P:ribosome disassembly"/>
    <property type="evidence" value="ECO:0007669"/>
    <property type="project" value="TreeGrafter"/>
</dbReference>
<dbReference type="CDD" id="cd01886">
    <property type="entry name" value="EF-G"/>
    <property type="match status" value="1"/>
</dbReference>
<dbReference type="CDD" id="cd16262">
    <property type="entry name" value="EFG_III"/>
    <property type="match status" value="1"/>
</dbReference>
<dbReference type="CDD" id="cd01434">
    <property type="entry name" value="EFG_mtEFG1_IV"/>
    <property type="match status" value="1"/>
</dbReference>
<dbReference type="CDD" id="cd03713">
    <property type="entry name" value="EFG_mtEFG_C"/>
    <property type="match status" value="1"/>
</dbReference>
<dbReference type="CDD" id="cd04088">
    <property type="entry name" value="EFG_mtEFG_II"/>
    <property type="match status" value="1"/>
</dbReference>
<dbReference type="FunFam" id="2.40.30.10:FF:000006">
    <property type="entry name" value="Elongation factor G"/>
    <property type="match status" value="1"/>
</dbReference>
<dbReference type="FunFam" id="3.30.230.10:FF:000003">
    <property type="entry name" value="Elongation factor G"/>
    <property type="match status" value="1"/>
</dbReference>
<dbReference type="FunFam" id="3.30.70.240:FF:000001">
    <property type="entry name" value="Elongation factor G"/>
    <property type="match status" value="1"/>
</dbReference>
<dbReference type="FunFam" id="3.30.70.870:FF:000001">
    <property type="entry name" value="Elongation factor G"/>
    <property type="match status" value="1"/>
</dbReference>
<dbReference type="FunFam" id="3.40.50.300:FF:000029">
    <property type="entry name" value="Elongation factor G"/>
    <property type="match status" value="1"/>
</dbReference>
<dbReference type="Gene3D" id="3.30.230.10">
    <property type="match status" value="1"/>
</dbReference>
<dbReference type="Gene3D" id="3.30.70.240">
    <property type="match status" value="1"/>
</dbReference>
<dbReference type="Gene3D" id="3.30.70.870">
    <property type="entry name" value="Elongation Factor G (Translational Gtpase), domain 3"/>
    <property type="match status" value="1"/>
</dbReference>
<dbReference type="Gene3D" id="3.40.50.300">
    <property type="entry name" value="P-loop containing nucleotide triphosphate hydrolases"/>
    <property type="match status" value="1"/>
</dbReference>
<dbReference type="Gene3D" id="2.40.30.10">
    <property type="entry name" value="Translation factors"/>
    <property type="match status" value="1"/>
</dbReference>
<dbReference type="HAMAP" id="MF_00054_B">
    <property type="entry name" value="EF_G_EF_2_B"/>
    <property type="match status" value="1"/>
</dbReference>
<dbReference type="InterPro" id="IPR041095">
    <property type="entry name" value="EFG_II"/>
</dbReference>
<dbReference type="InterPro" id="IPR009022">
    <property type="entry name" value="EFG_III"/>
</dbReference>
<dbReference type="InterPro" id="IPR035647">
    <property type="entry name" value="EFG_III/V"/>
</dbReference>
<dbReference type="InterPro" id="IPR047872">
    <property type="entry name" value="EFG_IV"/>
</dbReference>
<dbReference type="InterPro" id="IPR035649">
    <property type="entry name" value="EFG_V"/>
</dbReference>
<dbReference type="InterPro" id="IPR000640">
    <property type="entry name" value="EFG_V-like"/>
</dbReference>
<dbReference type="InterPro" id="IPR004161">
    <property type="entry name" value="EFTu-like_2"/>
</dbReference>
<dbReference type="InterPro" id="IPR031157">
    <property type="entry name" value="G_TR_CS"/>
</dbReference>
<dbReference type="InterPro" id="IPR027417">
    <property type="entry name" value="P-loop_NTPase"/>
</dbReference>
<dbReference type="InterPro" id="IPR020568">
    <property type="entry name" value="Ribosomal_Su5_D2-typ_SF"/>
</dbReference>
<dbReference type="InterPro" id="IPR014721">
    <property type="entry name" value="Ribsml_uS5_D2-typ_fold_subgr"/>
</dbReference>
<dbReference type="InterPro" id="IPR005225">
    <property type="entry name" value="Small_GTP-bd"/>
</dbReference>
<dbReference type="InterPro" id="IPR000795">
    <property type="entry name" value="T_Tr_GTP-bd_dom"/>
</dbReference>
<dbReference type="InterPro" id="IPR009000">
    <property type="entry name" value="Transl_B-barrel_sf"/>
</dbReference>
<dbReference type="InterPro" id="IPR004540">
    <property type="entry name" value="Transl_elong_EFG/EF2"/>
</dbReference>
<dbReference type="InterPro" id="IPR005517">
    <property type="entry name" value="Transl_elong_EFG/EF2_IV"/>
</dbReference>
<dbReference type="NCBIfam" id="TIGR00484">
    <property type="entry name" value="EF-G"/>
    <property type="match status" value="1"/>
</dbReference>
<dbReference type="NCBIfam" id="NF009379">
    <property type="entry name" value="PRK12740.1-3"/>
    <property type="match status" value="1"/>
</dbReference>
<dbReference type="NCBIfam" id="NF009381">
    <property type="entry name" value="PRK12740.1-5"/>
    <property type="match status" value="1"/>
</dbReference>
<dbReference type="NCBIfam" id="TIGR00231">
    <property type="entry name" value="small_GTP"/>
    <property type="match status" value="1"/>
</dbReference>
<dbReference type="PANTHER" id="PTHR43261:SF1">
    <property type="entry name" value="RIBOSOME-RELEASING FACTOR 2, MITOCHONDRIAL"/>
    <property type="match status" value="1"/>
</dbReference>
<dbReference type="PANTHER" id="PTHR43261">
    <property type="entry name" value="TRANSLATION ELONGATION FACTOR G-RELATED"/>
    <property type="match status" value="1"/>
</dbReference>
<dbReference type="Pfam" id="PF00679">
    <property type="entry name" value="EFG_C"/>
    <property type="match status" value="1"/>
</dbReference>
<dbReference type="Pfam" id="PF14492">
    <property type="entry name" value="EFG_III"/>
    <property type="match status" value="1"/>
</dbReference>
<dbReference type="Pfam" id="PF03764">
    <property type="entry name" value="EFG_IV"/>
    <property type="match status" value="1"/>
</dbReference>
<dbReference type="Pfam" id="PF00009">
    <property type="entry name" value="GTP_EFTU"/>
    <property type="match status" value="1"/>
</dbReference>
<dbReference type="Pfam" id="PF03144">
    <property type="entry name" value="GTP_EFTU_D2"/>
    <property type="match status" value="1"/>
</dbReference>
<dbReference type="PRINTS" id="PR00315">
    <property type="entry name" value="ELONGATNFCT"/>
</dbReference>
<dbReference type="SMART" id="SM00838">
    <property type="entry name" value="EFG_C"/>
    <property type="match status" value="1"/>
</dbReference>
<dbReference type="SMART" id="SM00889">
    <property type="entry name" value="EFG_IV"/>
    <property type="match status" value="1"/>
</dbReference>
<dbReference type="SUPFAM" id="SSF54980">
    <property type="entry name" value="EF-G C-terminal domain-like"/>
    <property type="match status" value="2"/>
</dbReference>
<dbReference type="SUPFAM" id="SSF52540">
    <property type="entry name" value="P-loop containing nucleoside triphosphate hydrolases"/>
    <property type="match status" value="1"/>
</dbReference>
<dbReference type="SUPFAM" id="SSF54211">
    <property type="entry name" value="Ribosomal protein S5 domain 2-like"/>
    <property type="match status" value="1"/>
</dbReference>
<dbReference type="SUPFAM" id="SSF50447">
    <property type="entry name" value="Translation proteins"/>
    <property type="match status" value="1"/>
</dbReference>
<dbReference type="PROSITE" id="PS00301">
    <property type="entry name" value="G_TR_1"/>
    <property type="match status" value="1"/>
</dbReference>
<dbReference type="PROSITE" id="PS51722">
    <property type="entry name" value="G_TR_2"/>
    <property type="match status" value="1"/>
</dbReference>
<protein>
    <recommendedName>
        <fullName evidence="1">Elongation factor G</fullName>
        <shortName evidence="1">EF-G</shortName>
    </recommendedName>
</protein>
<keyword id="KW-0963">Cytoplasm</keyword>
<keyword id="KW-0251">Elongation factor</keyword>
<keyword id="KW-0342">GTP-binding</keyword>
<keyword id="KW-0547">Nucleotide-binding</keyword>
<keyword id="KW-0648">Protein biosynthesis</keyword>
<proteinExistence type="inferred from homology"/>
<comment type="function">
    <text evidence="1">Catalyzes the GTP-dependent ribosomal translocation step during translation elongation. During this step, the ribosome changes from the pre-translocational (PRE) to the post-translocational (POST) state as the newly formed A-site-bound peptidyl-tRNA and P-site-bound deacylated tRNA move to the P and E sites, respectively. Catalyzes the coordinated movement of the two tRNA molecules, the mRNA and conformational changes in the ribosome.</text>
</comment>
<comment type="subcellular location">
    <subcellularLocation>
        <location evidence="1">Cytoplasm</location>
    </subcellularLocation>
</comment>
<comment type="similarity">
    <text evidence="1">Belongs to the TRAFAC class translation factor GTPase superfamily. Classic translation factor GTPase family. EF-G/EF-2 subfamily.</text>
</comment>
<feature type="chain" id="PRO_1000091705" description="Elongation factor G">
    <location>
        <begin position="1"/>
        <end position="699"/>
    </location>
</feature>
<feature type="domain" description="tr-type G">
    <location>
        <begin position="10"/>
        <end position="292"/>
    </location>
</feature>
<feature type="region of interest" description="Disordered" evidence="2">
    <location>
        <begin position="292"/>
        <end position="312"/>
    </location>
</feature>
<feature type="binding site" evidence="1">
    <location>
        <begin position="19"/>
        <end position="26"/>
    </location>
    <ligand>
        <name>GTP</name>
        <dbReference type="ChEBI" id="CHEBI:37565"/>
    </ligand>
</feature>
<feature type="binding site" evidence="1">
    <location>
        <begin position="90"/>
        <end position="94"/>
    </location>
    <ligand>
        <name>GTP</name>
        <dbReference type="ChEBI" id="CHEBI:37565"/>
    </ligand>
</feature>
<feature type="binding site" evidence="1">
    <location>
        <begin position="144"/>
        <end position="147"/>
    </location>
    <ligand>
        <name>GTP</name>
        <dbReference type="ChEBI" id="CHEBI:37565"/>
    </ligand>
</feature>
<organism>
    <name type="scientific">Coxiella burnetii (strain CbuG_Q212)</name>
    <name type="common">Coxiella burnetii (strain Q212)</name>
    <dbReference type="NCBI Taxonomy" id="434923"/>
    <lineage>
        <taxon>Bacteria</taxon>
        <taxon>Pseudomonadati</taxon>
        <taxon>Pseudomonadota</taxon>
        <taxon>Gammaproteobacteria</taxon>
        <taxon>Legionellales</taxon>
        <taxon>Coxiellaceae</taxon>
        <taxon>Coxiella</taxon>
    </lineage>
</organism>
<accession>B6J266</accession>
<sequence length="699" mass="77760">MATAREIPLNRTRNIGIMAHIDAGKTTTTERVLYYTGVSHKMGEVHEGSAVMDWMEQEQERGITITSAATTCYWLGMDQQYPKHRINIIDTPGHVDFTIEVERSLRVLDGAVAVFCSVGGVEPQSETVWRQANRYHVPRLGFVNKMDRAGANFLRVVNQVKDRLNANPIPIQLPIGAEEDFKGVIDLIRKKAIYWNEADRGRTYELADIPEDMKAEVQKWREKMIEAAAESSEELMDRYLEAGDLSPEQIRQGLRQRTLANEIVPILCGSAFKNKGVQALLDAVIDYLPSPTDVPAIRGEEDDGSEGSRSASDDEPFAALAFKIASDPFVGTLTFFRVYSGILKSGDSVYNPIKGKKERIGRLLQMHSNSREEIKEVRAGDIAAAVGLKTVTTGDTICNQQNIITLEKMDFPEPVISVAIEPKTKADQEKMGVALGKLAQEDPSFRVHTDEESAQTIIEGMGELHLEIIVDRMRREFNVEANVGKPRVAYRETIRRSVEQQGKYIRQTGGRGQYGDVWLRIEPREPGAGFEFENAIVGGVVPREYIPAVEKGVREQMENGIRAGYPVVDVKVTIFEGSYHDVDSSEMAFKIAGSMAFKEGASKADPVLLEPIMKVEVVTPEEYMGDVVGDLNRRRGMIQGMDESPAGKIVDVEVPLAEMFGYATDLRSLSQGRATYTMEFLKYAEAPSNIAEAIIKQQS</sequence>
<evidence type="ECO:0000255" key="1">
    <source>
        <dbReference type="HAMAP-Rule" id="MF_00054"/>
    </source>
</evidence>
<evidence type="ECO:0000256" key="2">
    <source>
        <dbReference type="SAM" id="MobiDB-lite"/>
    </source>
</evidence>